<reference key="1">
    <citation type="journal article" date="2002" name="Nature">
        <title>The genome sequence of Schizosaccharomyces pombe.</title>
        <authorList>
            <person name="Wood V."/>
            <person name="Gwilliam R."/>
            <person name="Rajandream M.A."/>
            <person name="Lyne M.H."/>
            <person name="Lyne R."/>
            <person name="Stewart A."/>
            <person name="Sgouros J.G."/>
            <person name="Peat N."/>
            <person name="Hayles J."/>
            <person name="Baker S.G."/>
            <person name="Basham D."/>
            <person name="Bowman S."/>
            <person name="Brooks K."/>
            <person name="Brown D."/>
            <person name="Brown S."/>
            <person name="Chillingworth T."/>
            <person name="Churcher C.M."/>
            <person name="Collins M."/>
            <person name="Connor R."/>
            <person name="Cronin A."/>
            <person name="Davis P."/>
            <person name="Feltwell T."/>
            <person name="Fraser A."/>
            <person name="Gentles S."/>
            <person name="Goble A."/>
            <person name="Hamlin N."/>
            <person name="Harris D.E."/>
            <person name="Hidalgo J."/>
            <person name="Hodgson G."/>
            <person name="Holroyd S."/>
            <person name="Hornsby T."/>
            <person name="Howarth S."/>
            <person name="Huckle E.J."/>
            <person name="Hunt S."/>
            <person name="Jagels K."/>
            <person name="James K.D."/>
            <person name="Jones L."/>
            <person name="Jones M."/>
            <person name="Leather S."/>
            <person name="McDonald S."/>
            <person name="McLean J."/>
            <person name="Mooney P."/>
            <person name="Moule S."/>
            <person name="Mungall K.L."/>
            <person name="Murphy L.D."/>
            <person name="Niblett D."/>
            <person name="Odell C."/>
            <person name="Oliver K."/>
            <person name="O'Neil S."/>
            <person name="Pearson D."/>
            <person name="Quail M.A."/>
            <person name="Rabbinowitsch E."/>
            <person name="Rutherford K.M."/>
            <person name="Rutter S."/>
            <person name="Saunders D."/>
            <person name="Seeger K."/>
            <person name="Sharp S."/>
            <person name="Skelton J."/>
            <person name="Simmonds M.N."/>
            <person name="Squares R."/>
            <person name="Squares S."/>
            <person name="Stevens K."/>
            <person name="Taylor K."/>
            <person name="Taylor R.G."/>
            <person name="Tivey A."/>
            <person name="Walsh S.V."/>
            <person name="Warren T."/>
            <person name="Whitehead S."/>
            <person name="Woodward J.R."/>
            <person name="Volckaert G."/>
            <person name="Aert R."/>
            <person name="Robben J."/>
            <person name="Grymonprez B."/>
            <person name="Weltjens I."/>
            <person name="Vanstreels E."/>
            <person name="Rieger M."/>
            <person name="Schaefer M."/>
            <person name="Mueller-Auer S."/>
            <person name="Gabel C."/>
            <person name="Fuchs M."/>
            <person name="Duesterhoeft A."/>
            <person name="Fritzc C."/>
            <person name="Holzer E."/>
            <person name="Moestl D."/>
            <person name="Hilbert H."/>
            <person name="Borzym K."/>
            <person name="Langer I."/>
            <person name="Beck A."/>
            <person name="Lehrach H."/>
            <person name="Reinhardt R."/>
            <person name="Pohl T.M."/>
            <person name="Eger P."/>
            <person name="Zimmermann W."/>
            <person name="Wedler H."/>
            <person name="Wambutt R."/>
            <person name="Purnelle B."/>
            <person name="Goffeau A."/>
            <person name="Cadieu E."/>
            <person name="Dreano S."/>
            <person name="Gloux S."/>
            <person name="Lelaure V."/>
            <person name="Mottier S."/>
            <person name="Galibert F."/>
            <person name="Aves S.J."/>
            <person name="Xiang Z."/>
            <person name="Hunt C."/>
            <person name="Moore K."/>
            <person name="Hurst S.M."/>
            <person name="Lucas M."/>
            <person name="Rochet M."/>
            <person name="Gaillardin C."/>
            <person name="Tallada V.A."/>
            <person name="Garzon A."/>
            <person name="Thode G."/>
            <person name="Daga R.R."/>
            <person name="Cruzado L."/>
            <person name="Jimenez J."/>
            <person name="Sanchez M."/>
            <person name="del Rey F."/>
            <person name="Benito J."/>
            <person name="Dominguez A."/>
            <person name="Revuelta J.L."/>
            <person name="Moreno S."/>
            <person name="Armstrong J."/>
            <person name="Forsburg S.L."/>
            <person name="Cerutti L."/>
            <person name="Lowe T."/>
            <person name="McCombie W.R."/>
            <person name="Paulsen I."/>
            <person name="Potashkin J."/>
            <person name="Shpakovski G.V."/>
            <person name="Ussery D."/>
            <person name="Barrell B.G."/>
            <person name="Nurse P."/>
        </authorList>
    </citation>
    <scope>NUCLEOTIDE SEQUENCE [LARGE SCALE GENOMIC DNA]</scope>
    <source>
        <strain>972 / ATCC 24843</strain>
    </source>
</reference>
<gene>
    <name type="primary">utr4</name>
    <name type="ORF">SPAC644.08</name>
</gene>
<dbReference type="EC" id="3.1.3.77" evidence="1"/>
<dbReference type="EMBL" id="CU329670">
    <property type="protein sequence ID" value="CAB90135.1"/>
    <property type="molecule type" value="Genomic_DNA"/>
</dbReference>
<dbReference type="RefSeq" id="NP_593876.1">
    <property type="nucleotide sequence ID" value="NM_001019306.2"/>
</dbReference>
<dbReference type="SMR" id="Q9P6Q2"/>
<dbReference type="BioGRID" id="280075">
    <property type="interactions" value="18"/>
</dbReference>
<dbReference type="FunCoup" id="Q9P6Q2">
    <property type="interactions" value="358"/>
</dbReference>
<dbReference type="STRING" id="284812.Q9P6Q2"/>
<dbReference type="PaxDb" id="4896-SPAC644.08.1"/>
<dbReference type="EnsemblFungi" id="SPAC644.08.1">
    <property type="protein sequence ID" value="SPAC644.08.1:pep"/>
    <property type="gene ID" value="SPAC644.08"/>
</dbReference>
<dbReference type="GeneID" id="2543661"/>
<dbReference type="KEGG" id="spo:2543661"/>
<dbReference type="PomBase" id="SPAC644.08">
    <property type="gene designation" value="utr4"/>
</dbReference>
<dbReference type="VEuPathDB" id="FungiDB:SPAC644.08"/>
<dbReference type="eggNOG" id="KOG2630">
    <property type="taxonomic scope" value="Eukaryota"/>
</dbReference>
<dbReference type="HOGENOM" id="CLU_023273_0_0_1"/>
<dbReference type="InParanoid" id="Q9P6Q2"/>
<dbReference type="OMA" id="EWDANGI"/>
<dbReference type="PhylomeDB" id="Q9P6Q2"/>
<dbReference type="Reactome" id="R-SPO-1237112">
    <property type="pathway name" value="Methionine salvage pathway"/>
</dbReference>
<dbReference type="UniPathway" id="UPA00904">
    <property type="reaction ID" value="UER00876"/>
</dbReference>
<dbReference type="UniPathway" id="UPA00904">
    <property type="reaction ID" value="UER00877"/>
</dbReference>
<dbReference type="PRO" id="PR:Q9P6Q2"/>
<dbReference type="Proteomes" id="UP000002485">
    <property type="component" value="Chromosome I"/>
</dbReference>
<dbReference type="GO" id="GO:0005829">
    <property type="term" value="C:cytosol"/>
    <property type="evidence" value="ECO:0007005"/>
    <property type="project" value="PomBase"/>
</dbReference>
<dbReference type="GO" id="GO:0005634">
    <property type="term" value="C:nucleus"/>
    <property type="evidence" value="ECO:0007005"/>
    <property type="project" value="PomBase"/>
</dbReference>
<dbReference type="GO" id="GO:0043874">
    <property type="term" value="F:acireductone synthase activity"/>
    <property type="evidence" value="ECO:0000318"/>
    <property type="project" value="GO_Central"/>
</dbReference>
<dbReference type="GO" id="GO:0000287">
    <property type="term" value="F:magnesium ion binding"/>
    <property type="evidence" value="ECO:0007669"/>
    <property type="project" value="UniProtKB-UniRule"/>
</dbReference>
<dbReference type="GO" id="GO:1990748">
    <property type="term" value="P:cellular detoxification"/>
    <property type="evidence" value="ECO:0000303"/>
    <property type="project" value="PomBase"/>
</dbReference>
<dbReference type="GO" id="GO:0019509">
    <property type="term" value="P:L-methionine salvage from methylthioadenosine"/>
    <property type="evidence" value="ECO:0000318"/>
    <property type="project" value="GO_Central"/>
</dbReference>
<dbReference type="CDD" id="cd01629">
    <property type="entry name" value="HAD_EP"/>
    <property type="match status" value="1"/>
</dbReference>
<dbReference type="Gene3D" id="1.10.720.60">
    <property type="match status" value="1"/>
</dbReference>
<dbReference type="Gene3D" id="3.40.50.1000">
    <property type="entry name" value="HAD superfamily/HAD-like"/>
    <property type="match status" value="1"/>
</dbReference>
<dbReference type="HAMAP" id="MF_03117">
    <property type="entry name" value="Salvage_MtnC_euk"/>
    <property type="match status" value="1"/>
</dbReference>
<dbReference type="InterPro" id="IPR023943">
    <property type="entry name" value="Enolase-ppase_E1"/>
</dbReference>
<dbReference type="InterPro" id="IPR027511">
    <property type="entry name" value="ENOPH1_eukaryotes"/>
</dbReference>
<dbReference type="InterPro" id="IPR036412">
    <property type="entry name" value="HAD-like_sf"/>
</dbReference>
<dbReference type="InterPro" id="IPR006439">
    <property type="entry name" value="HAD-SF_hydro_IA"/>
</dbReference>
<dbReference type="InterPro" id="IPR023214">
    <property type="entry name" value="HAD_sf"/>
</dbReference>
<dbReference type="NCBIfam" id="TIGR01691">
    <property type="entry name" value="enolase-ppase"/>
    <property type="match status" value="1"/>
</dbReference>
<dbReference type="NCBIfam" id="TIGR01549">
    <property type="entry name" value="HAD-SF-IA-v1"/>
    <property type="match status" value="1"/>
</dbReference>
<dbReference type="PANTHER" id="PTHR20371">
    <property type="entry name" value="ENOLASE-PHOSPHATASE E1"/>
    <property type="match status" value="1"/>
</dbReference>
<dbReference type="PANTHER" id="PTHR20371:SF1">
    <property type="entry name" value="ENOLASE-PHOSPHATASE E1"/>
    <property type="match status" value="1"/>
</dbReference>
<dbReference type="Pfam" id="PF00702">
    <property type="entry name" value="Hydrolase"/>
    <property type="match status" value="1"/>
</dbReference>
<dbReference type="SFLD" id="SFLDG01133">
    <property type="entry name" value="C1.5.4:_Enolase-phosphatase_Li"/>
    <property type="match status" value="1"/>
</dbReference>
<dbReference type="SFLD" id="SFLDG01129">
    <property type="entry name" value="C1.5:_HAD__Beta-PGM__Phosphata"/>
    <property type="match status" value="1"/>
</dbReference>
<dbReference type="SUPFAM" id="SSF56784">
    <property type="entry name" value="HAD-like"/>
    <property type="match status" value="1"/>
</dbReference>
<feature type="chain" id="PRO_0000314113" description="Enolase-phosphatase E1">
    <location>
        <begin position="1"/>
        <end position="216"/>
    </location>
</feature>
<feature type="binding site" evidence="1">
    <location>
        <position position="8"/>
    </location>
    <ligand>
        <name>Mg(2+)</name>
        <dbReference type="ChEBI" id="CHEBI:18420"/>
    </ligand>
</feature>
<feature type="binding site" evidence="1">
    <location>
        <position position="10"/>
    </location>
    <ligand>
        <name>Mg(2+)</name>
        <dbReference type="ChEBI" id="CHEBI:18420"/>
    </ligand>
</feature>
<feature type="binding site" evidence="1">
    <location>
        <begin position="115"/>
        <end position="116"/>
    </location>
    <ligand>
        <name>substrate</name>
    </ligand>
</feature>
<feature type="binding site" evidence="1">
    <location>
        <position position="149"/>
    </location>
    <ligand>
        <name>substrate</name>
    </ligand>
</feature>
<feature type="binding site" evidence="1">
    <location>
        <position position="172"/>
    </location>
    <ligand>
        <name>Mg(2+)</name>
        <dbReference type="ChEBI" id="CHEBI:18420"/>
    </ligand>
</feature>
<comment type="function">
    <text evidence="1">Bifunctional enzyme that catalyzes the enolization of 2,3-diketo-5-methylthiopentyl-1-phosphate (DK-MTP-1-P) into the intermediate 2-hydroxy-3-keto-5-methylthiopentenyl-1-phosphate (HK-MTPenyl-1-P), which is then dephosphorylated to form the acireductone 1,2-dihydroxy-3-keto-5-methylthiopentene (DHK-MTPene).</text>
</comment>
<comment type="catalytic activity">
    <reaction evidence="1">
        <text>5-methylsulfanyl-2,3-dioxopentyl phosphate + H2O = 1,2-dihydroxy-5-(methylsulfanyl)pent-1-en-3-one + phosphate</text>
        <dbReference type="Rhea" id="RHEA:21700"/>
        <dbReference type="ChEBI" id="CHEBI:15377"/>
        <dbReference type="ChEBI" id="CHEBI:43474"/>
        <dbReference type="ChEBI" id="CHEBI:49252"/>
        <dbReference type="ChEBI" id="CHEBI:58828"/>
        <dbReference type="EC" id="3.1.3.77"/>
    </reaction>
</comment>
<comment type="cofactor">
    <cofactor evidence="1">
        <name>Mg(2+)</name>
        <dbReference type="ChEBI" id="CHEBI:18420"/>
    </cofactor>
    <text evidence="1">Binds 1 Mg(2+) ion per subunit.</text>
</comment>
<comment type="pathway">
    <text evidence="1">Amino-acid biosynthesis; L-methionine biosynthesis via salvage pathway; L-methionine from S-methyl-5-thio-alpha-D-ribose 1-phosphate: step 3/6.</text>
</comment>
<comment type="pathway">
    <text evidence="1">Amino-acid biosynthesis; L-methionine biosynthesis via salvage pathway; L-methionine from S-methyl-5-thio-alpha-D-ribose 1-phosphate: step 4/6.</text>
</comment>
<comment type="subunit">
    <text evidence="1">Monomer.</text>
</comment>
<comment type="subcellular location">
    <subcellularLocation>
        <location>Cytoplasm</location>
    </subcellularLocation>
    <subcellularLocation>
        <location>Nucleus</location>
    </subcellularLocation>
</comment>
<comment type="similarity">
    <text evidence="1">Belongs to the HAD-like hydrolase superfamily. MasA/MtnC family.</text>
</comment>
<protein>
    <recommendedName>
        <fullName evidence="1">Enolase-phosphatase E1</fullName>
        <ecNumber evidence="1">3.1.3.77</ecNumber>
    </recommendedName>
    <alternativeName>
        <fullName evidence="1">2,3-diketo-5-methylthio-1-phosphopentane phosphatase</fullName>
    </alternativeName>
</protein>
<organism>
    <name type="scientific">Schizosaccharomyces pombe (strain 972 / ATCC 24843)</name>
    <name type="common">Fission yeast</name>
    <dbReference type="NCBI Taxonomy" id="284812"/>
    <lineage>
        <taxon>Eukaryota</taxon>
        <taxon>Fungi</taxon>
        <taxon>Dikarya</taxon>
        <taxon>Ascomycota</taxon>
        <taxon>Taphrinomycotina</taxon>
        <taxon>Schizosaccharomycetes</taxon>
        <taxon>Schizosaccharomycetales</taxon>
        <taxon>Schizosaccharomycetaceae</taxon>
        <taxon>Schizosaccharomyces</taxon>
    </lineage>
</organism>
<proteinExistence type="inferred from homology"/>
<evidence type="ECO:0000255" key="1">
    <source>
        <dbReference type="HAMAP-Rule" id="MF_03117"/>
    </source>
</evidence>
<keyword id="KW-0028">Amino-acid biosynthesis</keyword>
<keyword id="KW-0963">Cytoplasm</keyword>
<keyword id="KW-0378">Hydrolase</keyword>
<keyword id="KW-0460">Magnesium</keyword>
<keyword id="KW-0479">Metal-binding</keyword>
<keyword id="KW-0486">Methionine biosynthesis</keyword>
<keyword id="KW-0539">Nucleus</keyword>
<keyword id="KW-1185">Reference proteome</keyword>
<accession>Q9P6Q2</accession>
<name>ENOPH_SCHPO</name>
<sequence>MVKNLLLDIEGTVGSISFVKDKLFPYAASRYESYVNENYESDENLRELGKTPEEALINLRKLHAEGSKERSFKMVQGRIWKKGYESNELTSHLFPDVVPAIQRSLQLGMRVYIYSSGSVPAQKLYFEHSDAGNLLKYFSGYYDTTIGLKTECGSYVKIVGNSNPREWLFLSDNINELKAARKVGLHTGLVVRPGNDPVVDTSGFPVYNSFEILFTE</sequence>